<reference key="1">
    <citation type="book" date="2006" name="Gram positive pathogens, 2nd edition">
        <title>The Staphylococcus aureus NCTC 8325 genome.</title>
        <editorList>
            <person name="Fischetti V."/>
            <person name="Novick R."/>
            <person name="Ferretti J."/>
            <person name="Portnoy D."/>
            <person name="Rood J."/>
        </editorList>
        <authorList>
            <person name="Gillaspy A.F."/>
            <person name="Worrell V."/>
            <person name="Orvis J."/>
            <person name="Roe B.A."/>
            <person name="Dyer D.W."/>
            <person name="Iandolo J.J."/>
        </authorList>
    </citation>
    <scope>NUCLEOTIDE SEQUENCE [LARGE SCALE GENOMIC DNA]</scope>
    <source>
        <strain>NCTC 8325 / PS 47</strain>
    </source>
</reference>
<evidence type="ECO:0000255" key="1">
    <source>
        <dbReference type="HAMAP-Rule" id="MF_00829"/>
    </source>
</evidence>
<evidence type="ECO:0000305" key="2"/>
<accession>Q2FX13</accession>
<sequence length="68" mass="7789">MAMTNEEKVLAIREKLNIVNQGLLDPEKYKNANEEELTDIYDFVQSRERLSPSEVTAIADALGQLRHE</sequence>
<organism>
    <name type="scientific">Staphylococcus aureus (strain NCTC 8325 / PS 47)</name>
    <dbReference type="NCBI Taxonomy" id="93061"/>
    <lineage>
        <taxon>Bacteria</taxon>
        <taxon>Bacillati</taxon>
        <taxon>Bacillota</taxon>
        <taxon>Bacilli</taxon>
        <taxon>Bacillales</taxon>
        <taxon>Staphylococcaceae</taxon>
        <taxon>Staphylococcus</taxon>
    </lineage>
</organism>
<keyword id="KW-1185">Reference proteome</keyword>
<name>Y2093_STAA8</name>
<protein>
    <recommendedName>
        <fullName evidence="1">UPF0435 protein SAOUHSC_02093</fullName>
    </recommendedName>
</protein>
<proteinExistence type="inferred from homology"/>
<gene>
    <name type="ordered locus">SAOUHSC_02093</name>
</gene>
<feature type="chain" id="PRO_0000291422" description="UPF0435 protein SAOUHSC_02093">
    <location>
        <begin position="1"/>
        <end position="68"/>
    </location>
</feature>
<dbReference type="EMBL" id="CP000253">
    <property type="protein sequence ID" value="ABD31144.1"/>
    <property type="status" value="ALT_INIT"/>
    <property type="molecule type" value="Genomic_DNA"/>
</dbReference>
<dbReference type="RefSeq" id="YP_500585.1">
    <property type="nucleotide sequence ID" value="NC_007795.1"/>
</dbReference>
<dbReference type="SMR" id="Q2FX13"/>
<dbReference type="STRING" id="93061.SAOUHSC_02093"/>
<dbReference type="PaxDb" id="1280-SAXN108_1977"/>
<dbReference type="GeneID" id="3921166"/>
<dbReference type="KEGG" id="sao:SAOUHSC_02093"/>
<dbReference type="PATRIC" id="fig|93061.5.peg.1899"/>
<dbReference type="eggNOG" id="COG4840">
    <property type="taxonomic scope" value="Bacteria"/>
</dbReference>
<dbReference type="HOGENOM" id="CLU_199533_0_0_9"/>
<dbReference type="OrthoDB" id="2404926at2"/>
<dbReference type="Proteomes" id="UP000008816">
    <property type="component" value="Chromosome"/>
</dbReference>
<dbReference type="HAMAP" id="MF_00829">
    <property type="entry name" value="UPF0435"/>
    <property type="match status" value="1"/>
</dbReference>
<dbReference type="InterPro" id="IPR009507">
    <property type="entry name" value="UPF0435"/>
</dbReference>
<dbReference type="Pfam" id="PF06569">
    <property type="entry name" value="DUF1128"/>
    <property type="match status" value="1"/>
</dbReference>
<comment type="similarity">
    <text evidence="1">Belongs to the UPF0435 family.</text>
</comment>
<comment type="sequence caution" evidence="2">
    <conflict type="erroneous initiation">
        <sequence resource="EMBL-CDS" id="ABD31144"/>
    </conflict>
</comment>